<evidence type="ECO:0000250" key="1"/>
<evidence type="ECO:0000255" key="2"/>
<evidence type="ECO:0000305" key="3"/>
<gene>
    <name type="primary">GUCA2A</name>
</gene>
<feature type="signal peptide" evidence="2">
    <location>
        <begin position="1"/>
        <end position="21"/>
    </location>
</feature>
<feature type="propeptide" id="PRO_0000256704" evidence="1">
    <location>
        <begin position="22"/>
        <end position="100"/>
    </location>
</feature>
<feature type="peptide" id="PRO_0000256705" description="Guanylin">
    <location>
        <begin position="101"/>
        <end position="115"/>
    </location>
</feature>
<feature type="disulfide bond" evidence="1">
    <location>
        <begin position="69"/>
        <end position="82"/>
    </location>
</feature>
<feature type="disulfide bond" evidence="1">
    <location>
        <begin position="104"/>
        <end position="112"/>
    </location>
</feature>
<feature type="disulfide bond" evidence="1">
    <location>
        <begin position="107"/>
        <end position="115"/>
    </location>
</feature>
<keyword id="KW-1015">Disulfide bond</keyword>
<keyword id="KW-0964">Secreted</keyword>
<keyword id="KW-0732">Signal</keyword>
<organism>
    <name type="scientific">Notomys alexis</name>
    <name type="common">Spinifex hopping mouse</name>
    <dbReference type="NCBI Taxonomy" id="184396"/>
    <lineage>
        <taxon>Eukaryota</taxon>
        <taxon>Metazoa</taxon>
        <taxon>Chordata</taxon>
        <taxon>Craniata</taxon>
        <taxon>Vertebrata</taxon>
        <taxon>Euteleostomi</taxon>
        <taxon>Mammalia</taxon>
        <taxon>Eutheria</taxon>
        <taxon>Euarchontoglires</taxon>
        <taxon>Glires</taxon>
        <taxon>Rodentia</taxon>
        <taxon>Myomorpha</taxon>
        <taxon>Muroidea</taxon>
        <taxon>Muridae</taxon>
        <taxon>Murinae</taxon>
        <taxon>Notomys</taxon>
    </lineage>
</organism>
<dbReference type="EMBL" id="AF469495">
    <property type="protein sequence ID" value="AAL77416.1"/>
    <property type="molecule type" value="mRNA"/>
</dbReference>
<dbReference type="SMR" id="Q8R5G9"/>
<dbReference type="GO" id="GO:0005576">
    <property type="term" value="C:extracellular region"/>
    <property type="evidence" value="ECO:0007669"/>
    <property type="project" value="UniProtKB-SubCell"/>
</dbReference>
<dbReference type="GO" id="GO:0030250">
    <property type="term" value="F:guanylate cyclase activator activity"/>
    <property type="evidence" value="ECO:0007669"/>
    <property type="project" value="InterPro"/>
</dbReference>
<dbReference type="FunFam" id="3.90.1450.10:FF:000002">
    <property type="entry name" value="Guanylate cyclase activator 2A"/>
    <property type="match status" value="1"/>
</dbReference>
<dbReference type="Gene3D" id="3.90.1450.10">
    <property type="entry name" value="Guanylin"/>
    <property type="match status" value="1"/>
</dbReference>
<dbReference type="InterPro" id="IPR000879">
    <property type="entry name" value="Guanylin"/>
</dbReference>
<dbReference type="InterPro" id="IPR036382">
    <property type="entry name" value="Guanylin_sf"/>
</dbReference>
<dbReference type="PANTHER" id="PTHR11318:SF3">
    <property type="entry name" value="GUANYLIN"/>
    <property type="match status" value="1"/>
</dbReference>
<dbReference type="PANTHER" id="PTHR11318">
    <property type="entry name" value="GUANYLIN FAMILY MEMBER"/>
    <property type="match status" value="1"/>
</dbReference>
<dbReference type="Pfam" id="PF02058">
    <property type="entry name" value="Guanylin"/>
    <property type="match status" value="1"/>
</dbReference>
<dbReference type="PIRSF" id="PIRSF001849">
    <property type="entry name" value="Guanylin"/>
    <property type="match status" value="1"/>
</dbReference>
<dbReference type="PRINTS" id="PR00774">
    <property type="entry name" value="GUANYLIN"/>
</dbReference>
<dbReference type="SUPFAM" id="SSF89890">
    <property type="entry name" value="Proguanylin"/>
    <property type="match status" value="1"/>
</dbReference>
<name>GUC2A_NOTAL</name>
<reference key="1">
    <citation type="submission" date="2002-01" db="EMBL/GenBank/DDBJ databases">
        <title>Cloning and expression of guanylin and uroguanylin in the Spinifex hopping mouse, Notomys alexis.</title>
        <authorList>
            <person name="Donald J.A."/>
            <person name="Bartolo R.C."/>
        </authorList>
    </citation>
    <scope>NUCLEOTIDE SEQUENCE [MRNA]</scope>
</reference>
<protein>
    <recommendedName>
        <fullName>Guanylin</fullName>
    </recommendedName>
    <alternativeName>
        <fullName>Guanylate cyclase activator 2A</fullName>
    </alternativeName>
</protein>
<comment type="function">
    <text evidence="1">Endogenous activator of intestinal guanylate cyclase. It stimulates this enzyme through the same receptor binding region as the heat-stable enterotoxins (By similarity).</text>
</comment>
<comment type="subcellular location">
    <subcellularLocation>
        <location evidence="1">Secreted</location>
    </subcellularLocation>
</comment>
<comment type="similarity">
    <text evidence="3">Belongs to the guanylin family.</text>
</comment>
<sequence>MNACVLSVLCLLGAVAVLVEGVTVQDGDLSFPLESVKQLKDLREVQEPRLASHKKFAPRLLKPVAPQLCSQSAFPEALRPLCEKPNAEEILQRLEAIAQDPNTCEICAYAACTGC</sequence>
<accession>Q8R5G9</accession>
<proteinExistence type="inferred from homology"/>